<accession>P62527</accession>
<accession>P03060</accession>
<name>LPID_SALTY</name>
<proteinExistence type="predicted"/>
<keyword id="KW-0028">Amino-acid biosynthesis</keyword>
<keyword id="KW-0100">Branched-chain amino acid biosynthesis</keyword>
<keyword id="KW-0428">Leader peptide</keyword>
<keyword id="KW-1185">Reference proteome</keyword>
<gene>
    <name type="primary">ilvL</name>
    <name type="ordered locus">STM3900</name>
    <name type="ORF">STMD1.92</name>
</gene>
<dbReference type="EMBL" id="J01806">
    <property type="protein sequence ID" value="AAA27152.1"/>
    <property type="molecule type" value="Genomic_DNA"/>
</dbReference>
<dbReference type="EMBL" id="AF233324">
    <property type="protein sequence ID" value="AAF33486.1"/>
    <property type="molecule type" value="Genomic_DNA"/>
</dbReference>
<dbReference type="EMBL" id="AE006468">
    <property type="protein sequence ID" value="AAL22750.1"/>
    <property type="molecule type" value="Genomic_DNA"/>
</dbReference>
<dbReference type="PIR" id="A04601">
    <property type="entry name" value="LFEBIT"/>
</dbReference>
<dbReference type="RefSeq" id="NP_462791.1">
    <property type="nucleotide sequence ID" value="NC_003197.2"/>
</dbReference>
<dbReference type="RefSeq" id="WP_001311244.1">
    <property type="nucleotide sequence ID" value="NC_003197.2"/>
</dbReference>
<dbReference type="STRING" id="99287.STM3900"/>
<dbReference type="PaxDb" id="99287-STM3900"/>
<dbReference type="GeneID" id="1255426"/>
<dbReference type="GeneID" id="98391002"/>
<dbReference type="KEGG" id="stm:STM3900"/>
<dbReference type="PATRIC" id="fig|99287.12.peg.4122"/>
<dbReference type="HOGENOM" id="CLU_220955_0_0_6"/>
<dbReference type="BioCyc" id="SENT99287:STM3900-MONOMER"/>
<dbReference type="Proteomes" id="UP000001014">
    <property type="component" value="Chromosome"/>
</dbReference>
<dbReference type="GO" id="GO:0008652">
    <property type="term" value="P:amino acid biosynthetic process"/>
    <property type="evidence" value="ECO:0007669"/>
    <property type="project" value="UniProtKB-KW"/>
</dbReference>
<dbReference type="GO" id="GO:0009082">
    <property type="term" value="P:branched-chain amino acid biosynthetic process"/>
    <property type="evidence" value="ECO:0007669"/>
    <property type="project" value="UniProtKB-KW"/>
</dbReference>
<dbReference type="InterPro" id="IPR012567">
    <property type="entry name" value="IlvGEDA_leader"/>
</dbReference>
<dbReference type="NCBIfam" id="NF007744">
    <property type="entry name" value="PRK10424.1"/>
    <property type="match status" value="1"/>
</dbReference>
<dbReference type="Pfam" id="PF08046">
    <property type="entry name" value="IlvGEDA_leader"/>
    <property type="match status" value="1"/>
</dbReference>
<feature type="peptide" id="PRO_0000044757" description="ilv operon leader peptide">
    <location>
        <begin position="1"/>
        <end position="32"/>
    </location>
</feature>
<organism>
    <name type="scientific">Salmonella typhimurium (strain LT2 / SGSC1412 / ATCC 700720)</name>
    <dbReference type="NCBI Taxonomy" id="99287"/>
    <lineage>
        <taxon>Bacteria</taxon>
        <taxon>Pseudomonadati</taxon>
        <taxon>Pseudomonadota</taxon>
        <taxon>Gammaproteobacteria</taxon>
        <taxon>Enterobacterales</taxon>
        <taxon>Enterobacteriaceae</taxon>
        <taxon>Salmonella</taxon>
    </lineage>
</organism>
<protein>
    <recommendedName>
        <fullName>ilv operon leader peptide</fullName>
    </recommendedName>
    <alternativeName>
        <fullName>ilvGMEDA operon attenuator peptide</fullName>
    </alternativeName>
</protein>
<sequence>MTALLRVISLVVISVVVIIIPPCGAALGRGKA</sequence>
<reference key="1">
    <citation type="journal article" date="1981" name="Nucleic Acids Res.">
        <title>The DNA sequence of the promoter-attenuator of the ilvGEDA operon of Salmonella typhimurium.</title>
        <authorList>
            <person name="Taillon M.P."/>
            <person name="Gotto D.A."/>
            <person name="Lawther R.P."/>
        </authorList>
    </citation>
    <scope>NUCLEOTIDE SEQUENCE [GENOMIC DNA]</scope>
</reference>
<reference key="2">
    <citation type="journal article" date="2001" name="Nature">
        <title>Complete genome sequence of Salmonella enterica serovar Typhimurium LT2.</title>
        <authorList>
            <person name="McClelland M."/>
            <person name="Sanderson K.E."/>
            <person name="Spieth J."/>
            <person name="Clifton S.W."/>
            <person name="Latreille P."/>
            <person name="Courtney L."/>
            <person name="Porwollik S."/>
            <person name="Ali J."/>
            <person name="Dante M."/>
            <person name="Du F."/>
            <person name="Hou S."/>
            <person name="Layman D."/>
            <person name="Leonard S."/>
            <person name="Nguyen C."/>
            <person name="Scott K."/>
            <person name="Holmes A."/>
            <person name="Grewal N."/>
            <person name="Mulvaney E."/>
            <person name="Ryan E."/>
            <person name="Sun H."/>
            <person name="Florea L."/>
            <person name="Miller W."/>
            <person name="Stoneking T."/>
            <person name="Nhan M."/>
            <person name="Waterston R."/>
            <person name="Wilson R.K."/>
        </authorList>
    </citation>
    <scope>NUCLEOTIDE SEQUENCE [LARGE SCALE GENOMIC DNA]</scope>
    <source>
        <strain>LT2 / SGSC1412 / ATCC 700720</strain>
    </source>
</reference>